<evidence type="ECO:0000255" key="1">
    <source>
        <dbReference type="HAMAP-Rule" id="MF_00152"/>
    </source>
</evidence>
<comment type="function">
    <text evidence="1">Endonuclease IV plays a role in DNA repair. It cleaves phosphodiester bonds at apurinic or apyrimidinic (AP) sites, generating a 3'-hydroxyl group and a 5'-terminal sugar phosphate.</text>
</comment>
<comment type="catalytic activity">
    <reaction evidence="1">
        <text>Endonucleolytic cleavage to 5'-phosphooligonucleotide end-products.</text>
        <dbReference type="EC" id="3.1.21.2"/>
    </reaction>
</comment>
<comment type="cofactor">
    <cofactor evidence="1">
        <name>Zn(2+)</name>
        <dbReference type="ChEBI" id="CHEBI:29105"/>
    </cofactor>
    <text evidence="1">Binds 3 Zn(2+) ions.</text>
</comment>
<comment type="similarity">
    <text evidence="1">Belongs to the AP endonuclease 2 family.</text>
</comment>
<name>END4_ECOL5</name>
<reference key="1">
    <citation type="journal article" date="2006" name="Mol. Microbiol.">
        <title>Role of pathogenicity island-associated integrases in the genome plasticity of uropathogenic Escherichia coli strain 536.</title>
        <authorList>
            <person name="Hochhut B."/>
            <person name="Wilde C."/>
            <person name="Balling G."/>
            <person name="Middendorf B."/>
            <person name="Dobrindt U."/>
            <person name="Brzuszkiewicz E."/>
            <person name="Gottschalk G."/>
            <person name="Carniel E."/>
            <person name="Hacker J."/>
        </authorList>
    </citation>
    <scope>NUCLEOTIDE SEQUENCE [LARGE SCALE GENOMIC DNA]</scope>
    <source>
        <strain>536 / UPEC</strain>
    </source>
</reference>
<protein>
    <recommendedName>
        <fullName evidence="1">Probable endonuclease 4</fullName>
        <ecNumber evidence="1">3.1.21.2</ecNumber>
    </recommendedName>
    <alternativeName>
        <fullName evidence="1">Endodeoxyribonuclease IV</fullName>
    </alternativeName>
    <alternativeName>
        <fullName evidence="1">Endonuclease IV</fullName>
    </alternativeName>
</protein>
<organism>
    <name type="scientific">Escherichia coli O6:K15:H31 (strain 536 / UPEC)</name>
    <dbReference type="NCBI Taxonomy" id="362663"/>
    <lineage>
        <taxon>Bacteria</taxon>
        <taxon>Pseudomonadati</taxon>
        <taxon>Pseudomonadota</taxon>
        <taxon>Gammaproteobacteria</taxon>
        <taxon>Enterobacterales</taxon>
        <taxon>Enterobacteriaceae</taxon>
        <taxon>Escherichia</taxon>
    </lineage>
</organism>
<sequence length="285" mass="31462">MKYIGAHVSAAGGLANAAIRAAEIDATAFALFTKNQRQWRAAPLTTQTIDEFKAACEKYHYTSAQILPHDSYLINLGHPVAEALEKSRDAFIDEMQRCEQLGLSLLNFHPGSHLMQISEEDCLARIAESINIALDKTQGVTAVIENTAGQGSNLGFKFEHLAAIIDGVEDKSRVGVCIDTCHAFAAGYDLRTPAECEKTFADFARIVGFKYLRGMHLNDAKSTFGSRVDRHHSLGEGNIGHDAFRWIMQDDRFDGIPLILETINPDIWAEEIAWLKAQQTEKAVA</sequence>
<keyword id="KW-0227">DNA damage</keyword>
<keyword id="KW-0234">DNA repair</keyword>
<keyword id="KW-0255">Endonuclease</keyword>
<keyword id="KW-0378">Hydrolase</keyword>
<keyword id="KW-0479">Metal-binding</keyword>
<keyword id="KW-0540">Nuclease</keyword>
<keyword id="KW-0862">Zinc</keyword>
<feature type="chain" id="PRO_1000011304" description="Probable endonuclease 4">
    <location>
        <begin position="1"/>
        <end position="285"/>
    </location>
</feature>
<feature type="binding site" evidence="1">
    <location>
        <position position="69"/>
    </location>
    <ligand>
        <name>Zn(2+)</name>
        <dbReference type="ChEBI" id="CHEBI:29105"/>
        <label>1</label>
    </ligand>
</feature>
<feature type="binding site" evidence="1">
    <location>
        <position position="109"/>
    </location>
    <ligand>
        <name>Zn(2+)</name>
        <dbReference type="ChEBI" id="CHEBI:29105"/>
        <label>1</label>
    </ligand>
</feature>
<feature type="binding site" evidence="1">
    <location>
        <position position="145"/>
    </location>
    <ligand>
        <name>Zn(2+)</name>
        <dbReference type="ChEBI" id="CHEBI:29105"/>
        <label>1</label>
    </ligand>
</feature>
<feature type="binding site" evidence="1">
    <location>
        <position position="145"/>
    </location>
    <ligand>
        <name>Zn(2+)</name>
        <dbReference type="ChEBI" id="CHEBI:29105"/>
        <label>2</label>
    </ligand>
</feature>
<feature type="binding site" evidence="1">
    <location>
        <position position="179"/>
    </location>
    <ligand>
        <name>Zn(2+)</name>
        <dbReference type="ChEBI" id="CHEBI:29105"/>
        <label>2</label>
    </ligand>
</feature>
<feature type="binding site" evidence="1">
    <location>
        <position position="182"/>
    </location>
    <ligand>
        <name>Zn(2+)</name>
        <dbReference type="ChEBI" id="CHEBI:29105"/>
        <label>3</label>
    </ligand>
</feature>
<feature type="binding site" evidence="1">
    <location>
        <position position="216"/>
    </location>
    <ligand>
        <name>Zn(2+)</name>
        <dbReference type="ChEBI" id="CHEBI:29105"/>
        <label>2</label>
    </ligand>
</feature>
<feature type="binding site" evidence="1">
    <location>
        <position position="229"/>
    </location>
    <ligand>
        <name>Zn(2+)</name>
        <dbReference type="ChEBI" id="CHEBI:29105"/>
        <label>3</label>
    </ligand>
</feature>
<feature type="binding site" evidence="1">
    <location>
        <position position="231"/>
    </location>
    <ligand>
        <name>Zn(2+)</name>
        <dbReference type="ChEBI" id="CHEBI:29105"/>
        <label>3</label>
    </ligand>
</feature>
<feature type="binding site" evidence="1">
    <location>
        <position position="261"/>
    </location>
    <ligand>
        <name>Zn(2+)</name>
        <dbReference type="ChEBI" id="CHEBI:29105"/>
        <label>2</label>
    </ligand>
</feature>
<accession>Q0TFT1</accession>
<proteinExistence type="inferred from homology"/>
<dbReference type="EC" id="3.1.21.2" evidence="1"/>
<dbReference type="EMBL" id="CP000247">
    <property type="protein sequence ID" value="ABG70198.1"/>
    <property type="molecule type" value="Genomic_DNA"/>
</dbReference>
<dbReference type="RefSeq" id="WP_000873880.1">
    <property type="nucleotide sequence ID" value="NC_008253.1"/>
</dbReference>
<dbReference type="SMR" id="Q0TFT1"/>
<dbReference type="GeneID" id="86947100"/>
<dbReference type="KEGG" id="ecp:ECP_2199"/>
<dbReference type="HOGENOM" id="CLU_025885_0_4_6"/>
<dbReference type="Proteomes" id="UP000009182">
    <property type="component" value="Chromosome"/>
</dbReference>
<dbReference type="GO" id="GO:0008833">
    <property type="term" value="F:deoxyribonuclease IV (phage-T4-induced) activity"/>
    <property type="evidence" value="ECO:0007669"/>
    <property type="project" value="UniProtKB-UniRule"/>
</dbReference>
<dbReference type="GO" id="GO:0003677">
    <property type="term" value="F:DNA binding"/>
    <property type="evidence" value="ECO:0007669"/>
    <property type="project" value="InterPro"/>
</dbReference>
<dbReference type="GO" id="GO:0003906">
    <property type="term" value="F:DNA-(apurinic or apyrimidinic site) endonuclease activity"/>
    <property type="evidence" value="ECO:0007669"/>
    <property type="project" value="TreeGrafter"/>
</dbReference>
<dbReference type="GO" id="GO:0008081">
    <property type="term" value="F:phosphoric diester hydrolase activity"/>
    <property type="evidence" value="ECO:0007669"/>
    <property type="project" value="TreeGrafter"/>
</dbReference>
<dbReference type="GO" id="GO:0008270">
    <property type="term" value="F:zinc ion binding"/>
    <property type="evidence" value="ECO:0007669"/>
    <property type="project" value="UniProtKB-UniRule"/>
</dbReference>
<dbReference type="GO" id="GO:0006284">
    <property type="term" value="P:base-excision repair"/>
    <property type="evidence" value="ECO:0007669"/>
    <property type="project" value="TreeGrafter"/>
</dbReference>
<dbReference type="CDD" id="cd00019">
    <property type="entry name" value="AP2Ec"/>
    <property type="match status" value="1"/>
</dbReference>
<dbReference type="FunFam" id="3.20.20.150:FF:000001">
    <property type="entry name" value="Probable endonuclease 4"/>
    <property type="match status" value="1"/>
</dbReference>
<dbReference type="Gene3D" id="3.20.20.150">
    <property type="entry name" value="Divalent-metal-dependent TIM barrel enzymes"/>
    <property type="match status" value="1"/>
</dbReference>
<dbReference type="HAMAP" id="MF_00152">
    <property type="entry name" value="Nfo"/>
    <property type="match status" value="1"/>
</dbReference>
<dbReference type="InterPro" id="IPR001719">
    <property type="entry name" value="AP_endonuc_2"/>
</dbReference>
<dbReference type="InterPro" id="IPR018246">
    <property type="entry name" value="AP_endonuc_F2_Zn_BS"/>
</dbReference>
<dbReference type="InterPro" id="IPR036237">
    <property type="entry name" value="Xyl_isomerase-like_sf"/>
</dbReference>
<dbReference type="InterPro" id="IPR013022">
    <property type="entry name" value="Xyl_isomerase-like_TIM-brl"/>
</dbReference>
<dbReference type="NCBIfam" id="TIGR00587">
    <property type="entry name" value="nfo"/>
    <property type="match status" value="1"/>
</dbReference>
<dbReference type="NCBIfam" id="NF002199">
    <property type="entry name" value="PRK01060.1-4"/>
    <property type="match status" value="1"/>
</dbReference>
<dbReference type="PANTHER" id="PTHR21445:SF0">
    <property type="entry name" value="APURINIC-APYRIMIDINIC ENDONUCLEASE"/>
    <property type="match status" value="1"/>
</dbReference>
<dbReference type="PANTHER" id="PTHR21445">
    <property type="entry name" value="ENDONUCLEASE IV ENDODEOXYRIBONUCLEASE IV"/>
    <property type="match status" value="1"/>
</dbReference>
<dbReference type="Pfam" id="PF01261">
    <property type="entry name" value="AP_endonuc_2"/>
    <property type="match status" value="1"/>
</dbReference>
<dbReference type="SMART" id="SM00518">
    <property type="entry name" value="AP2Ec"/>
    <property type="match status" value="1"/>
</dbReference>
<dbReference type="SUPFAM" id="SSF51658">
    <property type="entry name" value="Xylose isomerase-like"/>
    <property type="match status" value="1"/>
</dbReference>
<dbReference type="PROSITE" id="PS00729">
    <property type="entry name" value="AP_NUCLEASE_F2_1"/>
    <property type="match status" value="1"/>
</dbReference>
<dbReference type="PROSITE" id="PS00730">
    <property type="entry name" value="AP_NUCLEASE_F2_2"/>
    <property type="match status" value="1"/>
</dbReference>
<dbReference type="PROSITE" id="PS00731">
    <property type="entry name" value="AP_NUCLEASE_F2_3"/>
    <property type="match status" value="1"/>
</dbReference>
<dbReference type="PROSITE" id="PS51432">
    <property type="entry name" value="AP_NUCLEASE_F2_4"/>
    <property type="match status" value="1"/>
</dbReference>
<gene>
    <name evidence="1" type="primary">nfo</name>
    <name type="ordered locus">ECP_2199</name>
</gene>